<keyword id="KW-1003">Cell membrane</keyword>
<keyword id="KW-0175">Coiled coil</keyword>
<keyword id="KW-0472">Membrane</keyword>
<keyword id="KW-1185">Reference proteome</keyword>
<keyword id="KW-0677">Repeat</keyword>
<proteinExistence type="evidence at transcript level"/>
<gene>
    <name evidence="6" type="primary">aex-4</name>
    <name evidence="6" type="synonym">tag-81</name>
    <name evidence="6" type="ORF">T14G12.2</name>
</gene>
<evidence type="ECO:0000255" key="1">
    <source>
        <dbReference type="PROSITE-ProRule" id="PRU00202"/>
    </source>
</evidence>
<evidence type="ECO:0000269" key="2">
    <source>
    </source>
</evidence>
<evidence type="ECO:0000305" key="3"/>
<evidence type="ECO:0000312" key="4">
    <source>
        <dbReference type="EMBL" id="ACI04533.1"/>
    </source>
</evidence>
<evidence type="ECO:0000312" key="5">
    <source>
        <dbReference type="Proteomes" id="UP000001940"/>
    </source>
</evidence>
<evidence type="ECO:0000312" key="6">
    <source>
        <dbReference type="WormBase" id="T14G12.2"/>
    </source>
</evidence>
<organism evidence="5">
    <name type="scientific">Caenorhabditis elegans</name>
    <dbReference type="NCBI Taxonomy" id="6239"/>
    <lineage>
        <taxon>Eukaryota</taxon>
        <taxon>Metazoa</taxon>
        <taxon>Ecdysozoa</taxon>
        <taxon>Nematoda</taxon>
        <taxon>Chromadorea</taxon>
        <taxon>Rhabditida</taxon>
        <taxon>Rhabditina</taxon>
        <taxon>Rhabditomorpha</taxon>
        <taxon>Rhabditoidea</taxon>
        <taxon>Rhabditidae</taxon>
        <taxon>Peloderinae</taxon>
        <taxon>Caenorhabditis</taxon>
    </lineage>
</organism>
<reference evidence="4" key="1">
    <citation type="journal article" date="2008" name="Proc. Natl. Acad. Sci. U.S.A.">
        <title>Intestinal signaling to GABAergic neurons regulates a rhythmic behavior in Caenorhabditis elegans.</title>
        <authorList>
            <person name="Mahoney T.R."/>
            <person name="Luo S."/>
            <person name="Round E.K."/>
            <person name="Brauner M."/>
            <person name="Gottschalk A."/>
            <person name="Thomas J.H."/>
            <person name="Nonet M.L."/>
        </authorList>
    </citation>
    <scope>NUCLEOTIDE SEQUENCE [MRNA]</scope>
    <scope>FUNCTION</scope>
    <scope>SUBCELLULAR LOCATION</scope>
    <scope>TISSUE SPECIFICITY</scope>
    <scope>DISRUPTION PHENOTYPE</scope>
</reference>
<reference evidence="5" key="2">
    <citation type="journal article" date="1998" name="Science">
        <title>Genome sequence of the nematode C. elegans: a platform for investigating biology.</title>
        <authorList>
            <consortium name="The C. elegans sequencing consortium"/>
        </authorList>
    </citation>
    <scope>NUCLEOTIDE SEQUENCE [LARGE SCALE GENOMIC DNA]</scope>
    <source>
        <strain evidence="5">Bristol N2</strain>
    </source>
</reference>
<protein>
    <recommendedName>
        <fullName evidence="3">t-SNARE protein aex-4</fullName>
    </recommendedName>
    <alternativeName>
        <fullName evidence="6">Aboc, expulsion defective protein 4</fullName>
    </alternativeName>
</protein>
<feature type="chain" id="PRO_0000438190" description="t-SNARE protein aex-4" evidence="3">
    <location>
        <begin position="1"/>
        <end position="234"/>
    </location>
</feature>
<feature type="domain" description="t-SNARE coiled-coil homology 1" evidence="1">
    <location>
        <begin position="37"/>
        <end position="99"/>
    </location>
</feature>
<feature type="domain" description="t-SNARE coiled-coil homology 2" evidence="1">
    <location>
        <begin position="170"/>
        <end position="232"/>
    </location>
</feature>
<comment type="function">
    <text evidence="2">t-SNARE protein which regulates the secretion of aex-5 from intestinal cells. Involved in the defecation motor program, which is a coordinated series of three muscle contractions that occurs every 45 seconds.</text>
</comment>
<comment type="subcellular location">
    <subcellularLocation>
        <location evidence="2">Cell membrane</location>
    </subcellularLocation>
</comment>
<comment type="tissue specificity">
    <text evidence="2">Expressed in intestinal cells.</text>
</comment>
<comment type="disruption phenotype">
    <text evidence="2">RNAi-mediated knockdown results in defecation abnormalities.</text>
</comment>
<comment type="similarity">
    <text evidence="3">Belongs to the SNAP-25 family.</text>
</comment>
<name>AEX4_CAEEL</name>
<sequence length="234" mass="27098">MARKTIDSIPEPIALPTEETVQKRIKLKMVDLDAEIAKLNVQSLDSSIQMIRDIDQMNVDAVQTTAALEDQDEQLDKIEANLSNVIDDLNVVSHNITAMEHYCGCGFFRILRAPFKYFRKRERDIIKEEVLEKMTSPKLRRKEESNMMMFTNSSKRRESTGDFMKRLTCDAIEDELERNLMQIDQGLESVKNLAVDMHVQLKLQEPKLNRIEELTETNDFVVEGVNDKVKKLLH</sequence>
<dbReference type="EMBL" id="FJ165552">
    <property type="protein sequence ID" value="ACI04533.1"/>
    <property type="molecule type" value="mRNA"/>
</dbReference>
<dbReference type="EMBL" id="BX284606">
    <property type="protein sequence ID" value="CCD62368.1"/>
    <property type="molecule type" value="Genomic_DNA"/>
</dbReference>
<dbReference type="PIR" id="T16877">
    <property type="entry name" value="T16877"/>
</dbReference>
<dbReference type="RefSeq" id="NP_508641.2">
    <property type="nucleotide sequence ID" value="NM_076240.8"/>
</dbReference>
<dbReference type="SMR" id="G5EEN8"/>
<dbReference type="FunCoup" id="G5EEN8">
    <property type="interactions" value="2"/>
</dbReference>
<dbReference type="STRING" id="6239.T14G12.2.1"/>
<dbReference type="PaxDb" id="6239-T14G12.2"/>
<dbReference type="EnsemblMetazoa" id="T14G12.2.1">
    <property type="protein sequence ID" value="T14G12.2.1"/>
    <property type="gene ID" value="WBGene00006454"/>
</dbReference>
<dbReference type="GeneID" id="188509"/>
<dbReference type="KEGG" id="cel:CELE_T14G12.2"/>
<dbReference type="AGR" id="WB:WBGene00006454"/>
<dbReference type="CTD" id="188509"/>
<dbReference type="WormBase" id="T14G12.2">
    <property type="protein sequence ID" value="CE35769"/>
    <property type="gene ID" value="WBGene00006454"/>
    <property type="gene designation" value="aex-4"/>
</dbReference>
<dbReference type="eggNOG" id="KOG3065">
    <property type="taxonomic scope" value="Eukaryota"/>
</dbReference>
<dbReference type="GeneTree" id="ENSGT00950000182843"/>
<dbReference type="HOGENOM" id="CLU_1416344_0_0_1"/>
<dbReference type="InParanoid" id="G5EEN8"/>
<dbReference type="OMA" id="TCDTIED"/>
<dbReference type="OrthoDB" id="19261at2759"/>
<dbReference type="PhylomeDB" id="G5EEN8"/>
<dbReference type="Reactome" id="R-CEL-181429">
    <property type="pathway name" value="Serotonin Neurotransmitter Release Cycle"/>
</dbReference>
<dbReference type="Reactome" id="R-CEL-181430">
    <property type="pathway name" value="Norepinephrine Neurotransmitter Release Cycle"/>
</dbReference>
<dbReference type="Reactome" id="R-CEL-199992">
    <property type="pathway name" value="trans-Golgi Network Vesicle Budding"/>
</dbReference>
<dbReference type="Reactome" id="R-CEL-210500">
    <property type="pathway name" value="Glutamate Neurotransmitter Release Cycle"/>
</dbReference>
<dbReference type="Reactome" id="R-CEL-212676">
    <property type="pathway name" value="Dopamine Neurotransmitter Release Cycle"/>
</dbReference>
<dbReference type="Reactome" id="R-CEL-264642">
    <property type="pathway name" value="Acetylcholine Neurotransmitter Release Cycle"/>
</dbReference>
<dbReference type="Reactome" id="R-CEL-449836">
    <property type="pathway name" value="Other interleukin signaling"/>
</dbReference>
<dbReference type="Reactome" id="R-CEL-6798695">
    <property type="pathway name" value="Neutrophil degranulation"/>
</dbReference>
<dbReference type="Reactome" id="R-CEL-888590">
    <property type="pathway name" value="GABA synthesis, release, reuptake and degradation"/>
</dbReference>
<dbReference type="Reactome" id="R-CEL-8980692">
    <property type="pathway name" value="RHOA GTPase cycle"/>
</dbReference>
<dbReference type="Reactome" id="R-CEL-9013026">
    <property type="pathway name" value="RHOB GTPase cycle"/>
</dbReference>
<dbReference type="Reactome" id="R-CEL-9013149">
    <property type="pathway name" value="RAC1 GTPase cycle"/>
</dbReference>
<dbReference type="Reactome" id="R-CEL-9013406">
    <property type="pathway name" value="RHOQ GTPase cycle"/>
</dbReference>
<dbReference type="Reactome" id="R-CEL-9013423">
    <property type="pathway name" value="RAC3 GTPase cycle"/>
</dbReference>
<dbReference type="Reactome" id="R-CEL-9035034">
    <property type="pathway name" value="RHOF GTPase cycle"/>
</dbReference>
<dbReference type="PRO" id="PR:G5EEN8"/>
<dbReference type="Proteomes" id="UP000001940">
    <property type="component" value="Chromosome X"/>
</dbReference>
<dbReference type="Bgee" id="WBGene00006454">
    <property type="expression patterns" value="Expressed in adult organism and 2 other cell types or tissues"/>
</dbReference>
<dbReference type="GO" id="GO:0005886">
    <property type="term" value="C:plasma membrane"/>
    <property type="evidence" value="ECO:0000318"/>
    <property type="project" value="GO_Central"/>
</dbReference>
<dbReference type="GO" id="GO:0098793">
    <property type="term" value="C:presynapse"/>
    <property type="evidence" value="ECO:0007669"/>
    <property type="project" value="GOC"/>
</dbReference>
<dbReference type="GO" id="GO:0031201">
    <property type="term" value="C:SNARE complex"/>
    <property type="evidence" value="ECO:0000318"/>
    <property type="project" value="GO_Central"/>
</dbReference>
<dbReference type="GO" id="GO:0005484">
    <property type="term" value="F:SNAP receptor activity"/>
    <property type="evidence" value="ECO:0000318"/>
    <property type="project" value="GO_Central"/>
</dbReference>
<dbReference type="GO" id="GO:0019905">
    <property type="term" value="F:syntaxin binding"/>
    <property type="evidence" value="ECO:0000318"/>
    <property type="project" value="GO_Central"/>
</dbReference>
<dbReference type="GO" id="GO:0006887">
    <property type="term" value="P:exocytosis"/>
    <property type="evidence" value="ECO:0000318"/>
    <property type="project" value="GO_Central"/>
</dbReference>
<dbReference type="GO" id="GO:2000294">
    <property type="term" value="P:positive regulation of defecation"/>
    <property type="evidence" value="ECO:0000315"/>
    <property type="project" value="UniProtKB"/>
</dbReference>
<dbReference type="GO" id="GO:0050714">
    <property type="term" value="P:positive regulation of protein secretion"/>
    <property type="evidence" value="ECO:0000315"/>
    <property type="project" value="UniProtKB"/>
</dbReference>
<dbReference type="GO" id="GO:2000292">
    <property type="term" value="P:regulation of defecation"/>
    <property type="evidence" value="ECO:0000316"/>
    <property type="project" value="UniProtKB"/>
</dbReference>
<dbReference type="GO" id="GO:0031629">
    <property type="term" value="P:synaptic vesicle fusion to presynaptic active zone membrane"/>
    <property type="evidence" value="ECO:0000318"/>
    <property type="project" value="GO_Central"/>
</dbReference>
<dbReference type="GO" id="GO:0016082">
    <property type="term" value="P:synaptic vesicle priming"/>
    <property type="evidence" value="ECO:0000318"/>
    <property type="project" value="GO_Central"/>
</dbReference>
<dbReference type="FunFam" id="1.20.5.110:FF:000157">
    <property type="entry name" value="t-SNARE protein aex-4"/>
    <property type="match status" value="1"/>
</dbReference>
<dbReference type="Gene3D" id="1.20.5.110">
    <property type="match status" value="2"/>
</dbReference>
<dbReference type="InterPro" id="IPR000727">
    <property type="entry name" value="T_SNARE_dom"/>
</dbReference>
<dbReference type="PANTHER" id="PTHR19305">
    <property type="entry name" value="SYNAPTOSOMAL ASSOCIATED PROTEIN"/>
    <property type="match status" value="1"/>
</dbReference>
<dbReference type="PANTHER" id="PTHR19305:SF10">
    <property type="entry name" value="T-SNARE PROTEIN AEX-4"/>
    <property type="match status" value="1"/>
</dbReference>
<dbReference type="SMART" id="SM00397">
    <property type="entry name" value="t_SNARE"/>
    <property type="match status" value="1"/>
</dbReference>
<dbReference type="SUPFAM" id="SSF58038">
    <property type="entry name" value="SNARE fusion complex"/>
    <property type="match status" value="2"/>
</dbReference>
<dbReference type="PROSITE" id="PS50192">
    <property type="entry name" value="T_SNARE"/>
    <property type="match status" value="2"/>
</dbReference>
<accession>G5EEN8</accession>